<proteinExistence type="evidence at protein level"/>
<keyword id="KW-0007">Acetylation</keyword>
<keyword id="KW-0020">Allergen</keyword>
<keyword id="KW-0903">Direct protein sequencing</keyword>
<keyword id="KW-0551">Lipid droplet</keyword>
<keyword id="KW-0472">Membrane</keyword>
<keyword id="KW-0812">Transmembrane</keyword>
<keyword id="KW-1133">Transmembrane helix</keyword>
<protein>
    <recommendedName>
        <fullName evidence="8">Oleosin Ara h 14.0101</fullName>
    </recommendedName>
    <alternativeName>
        <fullName evidence="7">Oleosin 5 variant A</fullName>
    </alternativeName>
    <allergenName evidence="8">Ara h 14.0101</allergenName>
</protein>
<name>OL141_ARAHY</name>
<reference evidence="9" key="1">
    <citation type="journal article" date="2005" name="Plant Physiol. Biochem.">
        <title>Purification and cloning of two high molecular mass isoforms of peanut seed oleosin encoded by cDNAs of equal sizes.</title>
        <authorList>
            <person name="Pons L."/>
            <person name="Chery C."/>
            <person name="Mrabet N."/>
            <person name="Schohn H."/>
            <person name="Lapicque F."/>
            <person name="Gueant J.L."/>
        </authorList>
    </citation>
    <scope>NUCLEOTIDE SEQUENCE [MRNA]</scope>
    <scope>PROTEIN SEQUENCE OF 147-156</scope>
    <scope>SUBUNIT</scope>
    <scope>SUBCELLULAR LOCATION</scope>
    <scope>TISSUE SPECIFICITY</scope>
    <scope>DEVELOPMENTAL STAGE</scope>
    <scope>CIRCULAR DICHROISM ANALYSIS</scope>
    <source>
        <strain evidence="6">cv. Valencia</strain>
        <tissue evidence="6">Seed</tissue>
    </source>
</reference>
<reference key="2">
    <citation type="journal article" date="2015" name="PLoS ONE">
        <title>Development of a novel strategy to isolate lipophilic allergens (oleosins) from peanuts.</title>
        <authorList>
            <person name="Schwager C."/>
            <person name="Kull S."/>
            <person name="Krause S."/>
            <person name="Schocker F."/>
            <person name="Petersen A."/>
            <person name="Becker W.M."/>
            <person name="Jappe U."/>
        </authorList>
    </citation>
    <scope>PROTEIN SEQUENCE OF 2-21; 27-43; 129-143 AND 146-156</scope>
    <scope>SUBCELLULAR LOCATION</scope>
    <scope>TISSUE SPECIFICITY</scope>
    <scope>IDENTIFICATION BY MASS SPECTROMETRY</scope>
    <scope>ACETYLATION AT ALA-2</scope>
    <scope>ALLERGEN</scope>
    <source>
        <tissue evidence="7">Seed</tissue>
    </source>
</reference>
<reference key="3">
    <citation type="journal article" date="2002" name="Allergy">
        <title>The 18 kDa peanut oleosin is a candidate allergen for IgE-mediated reactions to peanuts.</title>
        <authorList>
            <person name="Pons L."/>
            <person name="Chery C."/>
            <person name="Romano A."/>
            <person name="Namour F."/>
            <person name="Artesani M.C."/>
            <person name="Gueant J.L."/>
        </authorList>
    </citation>
    <scope>SUBUNIT</scope>
    <scope>SUBCELLULAR LOCATION</scope>
    <scope>TISSUE SPECIFICITY</scope>
    <scope>ALLERGEN</scope>
</reference>
<comment type="function">
    <text evidence="8">May have a structural role to stabilize the lipid body during desiccation of the seed by preventing coalescence of the oil. Probably interacts with both lipid and phospholipid moieties of lipid bodies. May also provide recognition signals for specific lipase anchorage in lipolysis during seedling growth.</text>
</comment>
<comment type="subunit">
    <text evidence="3 4">Homodimer. Forms oligomers.</text>
</comment>
<comment type="subcellular location">
    <subcellularLocation>
        <location evidence="3 4 5">Lipid droplet</location>
    </subcellularLocation>
    <subcellularLocation>
        <location evidence="1 3">Membrane</location>
        <topology evidence="1">Multi-pass membrane protein</topology>
    </subcellularLocation>
    <text evidence="8">Surface of oil bodies. Oleosins exist at a monolayer lipid/water interface.</text>
</comment>
<comment type="tissue specificity">
    <text evidence="3 4 5">Expressed in seeds (at protein level) (PubMed:12144563, PubMed:16095908, PubMed:25860789). Not expressed in leaves (PubMed:16095908).</text>
</comment>
<comment type="developmental stage">
    <text evidence="4">Expressed in immature (78 days post-seedling) and mature seeds.</text>
</comment>
<comment type="allergen">
    <text evidence="3 5">Causes an allergic reaction in human (PubMed:12144563, PubMed:25860789). Pooled with Ara h 15 binds to IgE in 75% of the 4 peanut-allergic patients tested (PubMed:25860789). Binds to IgE in 36% of the 14 peanut allergic-patients tested, however two of these patients IgE bind only weakly. IgE-binding is increased in roasted peanuts compared to fresh peanuts (PubMed:12144563).</text>
</comment>
<comment type="similarity">
    <text evidence="8">Belongs to the oleosin family.</text>
</comment>
<feature type="initiator methionine" description="Removed" evidence="5">
    <location>
        <position position="1"/>
    </location>
</feature>
<feature type="chain" id="PRO_0000449843" description="Oleosin Ara h 14.0101">
    <location>
        <begin position="2"/>
        <end position="176"/>
    </location>
</feature>
<feature type="transmembrane region" description="Helical" evidence="1">
    <location>
        <begin position="50"/>
        <end position="80"/>
    </location>
</feature>
<feature type="transmembrane region" description="Helical" evidence="1">
    <location>
        <begin position="95"/>
        <end position="117"/>
    </location>
</feature>
<feature type="region of interest" description="Disordered" evidence="2">
    <location>
        <begin position="157"/>
        <end position="176"/>
    </location>
</feature>
<feature type="modified residue" description="N-acetylalanine; alternate" evidence="5">
    <location>
        <position position="2"/>
    </location>
</feature>
<feature type="sequence conflict" description="In Ref. 1; AAK13449." evidence="8" ref="1">
    <original>M</original>
    <variation>V</variation>
    <location>
        <position position="149"/>
    </location>
</feature>
<evidence type="ECO:0000255" key="1"/>
<evidence type="ECO:0000256" key="2">
    <source>
        <dbReference type="SAM" id="MobiDB-lite"/>
    </source>
</evidence>
<evidence type="ECO:0000269" key="3">
    <source>
    </source>
</evidence>
<evidence type="ECO:0000269" key="4">
    <source>
    </source>
</evidence>
<evidence type="ECO:0000269" key="5">
    <source>
    </source>
</evidence>
<evidence type="ECO:0000303" key="6">
    <source>
    </source>
</evidence>
<evidence type="ECO:0000303" key="7">
    <source>
    </source>
</evidence>
<evidence type="ECO:0000305" key="8"/>
<evidence type="ECO:0000312" key="9">
    <source>
        <dbReference type="EMBL" id="AAK13449.1"/>
    </source>
</evidence>
<accession>Q9AXI1</accession>
<organism evidence="9">
    <name type="scientific">Arachis hypogaea</name>
    <name type="common">Peanut</name>
    <dbReference type="NCBI Taxonomy" id="3818"/>
    <lineage>
        <taxon>Eukaryota</taxon>
        <taxon>Viridiplantae</taxon>
        <taxon>Streptophyta</taxon>
        <taxon>Embryophyta</taxon>
        <taxon>Tracheophyta</taxon>
        <taxon>Spermatophyta</taxon>
        <taxon>Magnoliopsida</taxon>
        <taxon>eudicotyledons</taxon>
        <taxon>Gunneridae</taxon>
        <taxon>Pentapetalae</taxon>
        <taxon>rosids</taxon>
        <taxon>fabids</taxon>
        <taxon>Fabales</taxon>
        <taxon>Fabaceae</taxon>
        <taxon>Papilionoideae</taxon>
        <taxon>50 kb inversion clade</taxon>
        <taxon>dalbergioids sensu lato</taxon>
        <taxon>Dalbergieae</taxon>
        <taxon>Pterocarpus clade</taxon>
        <taxon>Arachis</taxon>
    </lineage>
</organism>
<sequence>MATATDRAPHQVQVHTPTTQRVDVPRRGYDVSGGGIKTLLPERGPSTSQIIAVLVGVPTGGTLLLLSGLSLLGTIIGLAIATPVFTFFSPVIVPAVVTIGLAVTGILTAGACGLTGLMSLSWMINFIRQVHGTTVPDQLDSVKRRMADMADYVGQKTKDAGQQIQTKAQDVKRSSS</sequence>
<dbReference type="EMBL" id="AF325917">
    <property type="protein sequence ID" value="AAK13449.1"/>
    <property type="molecule type" value="mRNA"/>
</dbReference>
<dbReference type="SMR" id="Q9AXI1"/>
<dbReference type="Allergome" id="11753">
    <property type="allergen name" value="Ara h 14"/>
</dbReference>
<dbReference type="Allergome" id="11754">
    <property type="allergen name" value="Ara h 14.0101"/>
</dbReference>
<dbReference type="iPTMnet" id="Q9AXI1"/>
<dbReference type="GO" id="GO:0016020">
    <property type="term" value="C:membrane"/>
    <property type="evidence" value="ECO:0007669"/>
    <property type="project" value="UniProtKB-SubCell"/>
</dbReference>
<dbReference type="GO" id="GO:0012511">
    <property type="term" value="C:monolayer-surrounded lipid storage body"/>
    <property type="evidence" value="ECO:0007669"/>
    <property type="project" value="InterPro"/>
</dbReference>
<dbReference type="GO" id="GO:0019915">
    <property type="term" value="P:lipid storage"/>
    <property type="evidence" value="ECO:0007669"/>
    <property type="project" value="TreeGrafter"/>
</dbReference>
<dbReference type="GO" id="GO:0050826">
    <property type="term" value="P:response to freezing"/>
    <property type="evidence" value="ECO:0007669"/>
    <property type="project" value="TreeGrafter"/>
</dbReference>
<dbReference type="GO" id="GO:0010344">
    <property type="term" value="P:seed oilbody biogenesis"/>
    <property type="evidence" value="ECO:0007669"/>
    <property type="project" value="TreeGrafter"/>
</dbReference>
<dbReference type="InterPro" id="IPR000136">
    <property type="entry name" value="Oleosin"/>
</dbReference>
<dbReference type="PANTHER" id="PTHR33203">
    <property type="entry name" value="OLEOSIN"/>
    <property type="match status" value="1"/>
</dbReference>
<dbReference type="PANTHER" id="PTHR33203:SF63">
    <property type="entry name" value="OLEOSIN 18.2 KDA"/>
    <property type="match status" value="1"/>
</dbReference>
<dbReference type="Pfam" id="PF01277">
    <property type="entry name" value="Oleosin"/>
    <property type="match status" value="1"/>
</dbReference>